<reference key="1">
    <citation type="submission" date="2003-10" db="EMBL/GenBank/DDBJ databases">
        <authorList>
            <consortium name="NIH - Zebrafish Gene Collection (ZGC) project"/>
        </authorList>
    </citation>
    <scope>NUCLEOTIDE SEQUENCE [LARGE SCALE MRNA]</scope>
    <source>
        <tissue>Embryo</tissue>
        <tissue>Retina</tissue>
    </source>
</reference>
<evidence type="ECO:0000250" key="1"/>
<evidence type="ECO:0000255" key="2"/>
<evidence type="ECO:0000305" key="3"/>
<keyword id="KW-0472">Membrane</keyword>
<keyword id="KW-0496">Mitochondrion</keyword>
<keyword id="KW-0999">Mitochondrion inner membrane</keyword>
<keyword id="KW-1185">Reference proteome</keyword>
<keyword id="KW-0809">Transit peptide</keyword>
<feature type="transit peptide" description="Mitochondrion" evidence="2">
    <location>
        <begin position="1"/>
        <end position="34"/>
    </location>
</feature>
<feature type="chain" id="PRO_0000228651" description="Coenzyme Q-binding protein COQ10 homolog, mitochondrial">
    <location>
        <begin position="35"/>
        <end position="233"/>
    </location>
</feature>
<feature type="sequence conflict" description="In Ref. 1; AAH71353." evidence="3" ref="1">
    <original>E</original>
    <variation>K</variation>
    <location>
        <position position="3"/>
    </location>
</feature>
<feature type="sequence conflict" description="In Ref. 1; AAH71353." evidence="3" ref="1">
    <original>P</original>
    <variation>T</variation>
    <location>
        <position position="50"/>
    </location>
</feature>
<protein>
    <recommendedName>
        <fullName>Coenzyme Q-binding protein COQ10 homolog, mitochondrial</fullName>
    </recommendedName>
</protein>
<name>CQ10X_DANRE</name>
<proteinExistence type="evidence at transcript level"/>
<dbReference type="EMBL" id="BC059644">
    <property type="protein sequence ID" value="AAH59644.1"/>
    <property type="status" value="ALT_INIT"/>
    <property type="molecule type" value="mRNA"/>
</dbReference>
<dbReference type="EMBL" id="BC071353">
    <property type="protein sequence ID" value="AAH71353.1"/>
    <property type="status" value="ALT_INIT"/>
    <property type="molecule type" value="mRNA"/>
</dbReference>
<dbReference type="RefSeq" id="NP_957083.2">
    <property type="nucleotide sequence ID" value="NM_200789.2"/>
</dbReference>
<dbReference type="SMR" id="Q6PBN4"/>
<dbReference type="FunCoup" id="Q6PBN4">
    <property type="interactions" value="340"/>
</dbReference>
<dbReference type="STRING" id="7955.ENSDARP00000024330"/>
<dbReference type="PaxDb" id="7955-ENSDARP00000024330"/>
<dbReference type="GeneID" id="393762"/>
<dbReference type="KEGG" id="dre:393762"/>
<dbReference type="AGR" id="ZFIN:ZDB-GENE-040426-1760"/>
<dbReference type="ZFIN" id="ZDB-GENE-040426-1760">
    <property type="gene designation" value="si:ch73-141c7.1"/>
</dbReference>
<dbReference type="eggNOG" id="KOG3177">
    <property type="taxonomic scope" value="Eukaryota"/>
</dbReference>
<dbReference type="InParanoid" id="Q6PBN4"/>
<dbReference type="OrthoDB" id="292693at2759"/>
<dbReference type="PhylomeDB" id="Q6PBN4"/>
<dbReference type="PRO" id="PR:Q6PBN4"/>
<dbReference type="Proteomes" id="UP000000437">
    <property type="component" value="Chromosome 3"/>
</dbReference>
<dbReference type="GO" id="GO:0005743">
    <property type="term" value="C:mitochondrial inner membrane"/>
    <property type="evidence" value="ECO:0007669"/>
    <property type="project" value="UniProtKB-SubCell"/>
</dbReference>
<dbReference type="GO" id="GO:0005739">
    <property type="term" value="C:mitochondrion"/>
    <property type="evidence" value="ECO:0000318"/>
    <property type="project" value="GO_Central"/>
</dbReference>
<dbReference type="GO" id="GO:0048039">
    <property type="term" value="F:ubiquinone binding"/>
    <property type="evidence" value="ECO:0007669"/>
    <property type="project" value="InterPro"/>
</dbReference>
<dbReference type="GO" id="GO:0045333">
    <property type="term" value="P:cellular respiration"/>
    <property type="evidence" value="ECO:0007669"/>
    <property type="project" value="InterPro"/>
</dbReference>
<dbReference type="CDD" id="cd07813">
    <property type="entry name" value="COQ10p_like"/>
    <property type="match status" value="1"/>
</dbReference>
<dbReference type="FunFam" id="3.30.530.20:FF:000002">
    <property type="entry name" value="Coenzyme Q-binding protein COQ10 homolog, mitochondrial"/>
    <property type="match status" value="1"/>
</dbReference>
<dbReference type="Gene3D" id="3.30.530.20">
    <property type="match status" value="1"/>
</dbReference>
<dbReference type="InterPro" id="IPR044996">
    <property type="entry name" value="COQ10-like"/>
</dbReference>
<dbReference type="InterPro" id="IPR005031">
    <property type="entry name" value="COQ10_START"/>
</dbReference>
<dbReference type="InterPro" id="IPR023393">
    <property type="entry name" value="START-like_dom_sf"/>
</dbReference>
<dbReference type="PANTHER" id="PTHR12901:SF14">
    <property type="entry name" value="COENZYME Q-BINDING PROTEIN COQ10 HOMOLOG, MITOCHONDRIAL"/>
    <property type="match status" value="1"/>
</dbReference>
<dbReference type="PANTHER" id="PTHR12901">
    <property type="entry name" value="SPERM PROTEIN HOMOLOG"/>
    <property type="match status" value="1"/>
</dbReference>
<dbReference type="Pfam" id="PF03364">
    <property type="entry name" value="Polyketide_cyc"/>
    <property type="match status" value="1"/>
</dbReference>
<dbReference type="SUPFAM" id="SSF55961">
    <property type="entry name" value="Bet v1-like"/>
    <property type="match status" value="1"/>
</dbReference>
<organism>
    <name type="scientific">Danio rerio</name>
    <name type="common">Zebrafish</name>
    <name type="synonym">Brachydanio rerio</name>
    <dbReference type="NCBI Taxonomy" id="7955"/>
    <lineage>
        <taxon>Eukaryota</taxon>
        <taxon>Metazoa</taxon>
        <taxon>Chordata</taxon>
        <taxon>Craniata</taxon>
        <taxon>Vertebrata</taxon>
        <taxon>Euteleostomi</taxon>
        <taxon>Actinopterygii</taxon>
        <taxon>Neopterygii</taxon>
        <taxon>Teleostei</taxon>
        <taxon>Ostariophysi</taxon>
        <taxon>Cypriniformes</taxon>
        <taxon>Danionidae</taxon>
        <taxon>Danioninae</taxon>
        <taxon>Danio</taxon>
    </lineage>
</organism>
<accession>Q6PBN4</accession>
<accession>Q6IQQ1</accession>
<sequence length="233" mass="26631">MAEKATSLFLRAMEISEKQSFDVMRRNSSCTIRHLSSCGILETRRVSLPPPPSASSQMVPSRSFINLTAPLIMRRMEYSESRSINYSPEQMYDVVANVEQYQQFVPWCKKSKVTRGRNGDMRAQLEIGFPPIVERYTSEVTVIPNHQVRAVCTDGSLFNHLETLWRFTPGAAGQSCNVEFFVTFEFKSLLHSQLATMFFDEVVKQMVNAFETRAKKLYGTGVHRQQASLRRAI</sequence>
<comment type="function">
    <text evidence="1">Required for the function of coenzyme Q in the respiratory chain. May serve as a chaperone or may be involved in the transport of Q6 from its site of synthesis to the catalytic sites of the respiratory complexes (By similarity).</text>
</comment>
<comment type="subunit">
    <text evidence="1">Interacts with coenzyme Q.</text>
</comment>
<comment type="subcellular location">
    <subcellularLocation>
        <location evidence="1">Mitochondrion inner membrane</location>
        <topology evidence="1">Peripheral membrane protein</topology>
        <orientation evidence="1">Matrix side</orientation>
    </subcellularLocation>
</comment>
<comment type="similarity">
    <text evidence="3">Belongs to the COQ10 family.</text>
</comment>
<comment type="sequence caution" evidence="3">
    <conflict type="erroneous initiation">
        <sequence resource="EMBL-CDS" id="AAH59644"/>
    </conflict>
</comment>
<comment type="sequence caution" evidence="3">
    <conflict type="erroneous initiation">
        <sequence resource="EMBL-CDS" id="AAH71353"/>
    </conflict>
</comment>
<gene>
    <name type="ORF">zgc:73324</name>
</gene>